<feature type="chain" id="PRO_1000214664" description="Large ribosomal subunit protein uL18">
    <location>
        <begin position="1"/>
        <end position="116"/>
    </location>
</feature>
<name>RL18_AZOVD</name>
<organism>
    <name type="scientific">Azotobacter vinelandii (strain DJ / ATCC BAA-1303)</name>
    <dbReference type="NCBI Taxonomy" id="322710"/>
    <lineage>
        <taxon>Bacteria</taxon>
        <taxon>Pseudomonadati</taxon>
        <taxon>Pseudomonadota</taxon>
        <taxon>Gammaproteobacteria</taxon>
        <taxon>Pseudomonadales</taxon>
        <taxon>Pseudomonadaceae</taxon>
        <taxon>Azotobacter</taxon>
    </lineage>
</organism>
<accession>C1DKM9</accession>
<dbReference type="EMBL" id="CP001157">
    <property type="protein sequence ID" value="ACO76892.1"/>
    <property type="molecule type" value="Genomic_DNA"/>
</dbReference>
<dbReference type="RefSeq" id="WP_012699318.1">
    <property type="nucleotide sequence ID" value="NC_012560.1"/>
</dbReference>
<dbReference type="SMR" id="C1DKM9"/>
<dbReference type="STRING" id="322710.Avin_06410"/>
<dbReference type="EnsemblBacteria" id="ACO76892">
    <property type="protein sequence ID" value="ACO76892"/>
    <property type="gene ID" value="Avin_06410"/>
</dbReference>
<dbReference type="GeneID" id="88184052"/>
<dbReference type="KEGG" id="avn:Avin_06410"/>
<dbReference type="eggNOG" id="COG0256">
    <property type="taxonomic scope" value="Bacteria"/>
</dbReference>
<dbReference type="HOGENOM" id="CLU_098841_0_1_6"/>
<dbReference type="OrthoDB" id="9810939at2"/>
<dbReference type="Proteomes" id="UP000002424">
    <property type="component" value="Chromosome"/>
</dbReference>
<dbReference type="GO" id="GO:0022625">
    <property type="term" value="C:cytosolic large ribosomal subunit"/>
    <property type="evidence" value="ECO:0007669"/>
    <property type="project" value="TreeGrafter"/>
</dbReference>
<dbReference type="GO" id="GO:0008097">
    <property type="term" value="F:5S rRNA binding"/>
    <property type="evidence" value="ECO:0007669"/>
    <property type="project" value="TreeGrafter"/>
</dbReference>
<dbReference type="GO" id="GO:0003735">
    <property type="term" value="F:structural constituent of ribosome"/>
    <property type="evidence" value="ECO:0007669"/>
    <property type="project" value="InterPro"/>
</dbReference>
<dbReference type="GO" id="GO:0006412">
    <property type="term" value="P:translation"/>
    <property type="evidence" value="ECO:0007669"/>
    <property type="project" value="UniProtKB-UniRule"/>
</dbReference>
<dbReference type="CDD" id="cd00432">
    <property type="entry name" value="Ribosomal_L18_L5e"/>
    <property type="match status" value="1"/>
</dbReference>
<dbReference type="FunFam" id="3.30.420.100:FF:000001">
    <property type="entry name" value="50S ribosomal protein L18"/>
    <property type="match status" value="1"/>
</dbReference>
<dbReference type="Gene3D" id="3.30.420.100">
    <property type="match status" value="1"/>
</dbReference>
<dbReference type="HAMAP" id="MF_01337_B">
    <property type="entry name" value="Ribosomal_uL18_B"/>
    <property type="match status" value="1"/>
</dbReference>
<dbReference type="InterPro" id="IPR004389">
    <property type="entry name" value="Ribosomal_uL18_bac-type"/>
</dbReference>
<dbReference type="InterPro" id="IPR005484">
    <property type="entry name" value="Ribosomal_uL18_bac/euk"/>
</dbReference>
<dbReference type="NCBIfam" id="TIGR00060">
    <property type="entry name" value="L18_bact"/>
    <property type="match status" value="1"/>
</dbReference>
<dbReference type="PANTHER" id="PTHR12899">
    <property type="entry name" value="39S RIBOSOMAL PROTEIN L18, MITOCHONDRIAL"/>
    <property type="match status" value="1"/>
</dbReference>
<dbReference type="PANTHER" id="PTHR12899:SF3">
    <property type="entry name" value="LARGE RIBOSOMAL SUBUNIT PROTEIN UL18M"/>
    <property type="match status" value="1"/>
</dbReference>
<dbReference type="Pfam" id="PF00861">
    <property type="entry name" value="Ribosomal_L18p"/>
    <property type="match status" value="1"/>
</dbReference>
<dbReference type="SUPFAM" id="SSF53137">
    <property type="entry name" value="Translational machinery components"/>
    <property type="match status" value="1"/>
</dbReference>
<proteinExistence type="inferred from homology"/>
<protein>
    <recommendedName>
        <fullName evidence="1">Large ribosomal subunit protein uL18</fullName>
    </recommendedName>
    <alternativeName>
        <fullName evidence="2">50S ribosomal protein L18</fullName>
    </alternativeName>
</protein>
<gene>
    <name evidence="1" type="primary">rplR</name>
    <name type="ordered locus">Avin_06410</name>
</gene>
<keyword id="KW-0687">Ribonucleoprotein</keyword>
<keyword id="KW-0689">Ribosomal protein</keyword>
<keyword id="KW-0694">RNA-binding</keyword>
<keyword id="KW-0699">rRNA-binding</keyword>
<evidence type="ECO:0000255" key="1">
    <source>
        <dbReference type="HAMAP-Rule" id="MF_01337"/>
    </source>
</evidence>
<evidence type="ECO:0000305" key="2"/>
<comment type="function">
    <text evidence="1">This is one of the proteins that bind and probably mediate the attachment of the 5S RNA into the large ribosomal subunit, where it forms part of the central protuberance.</text>
</comment>
<comment type="subunit">
    <text evidence="1">Part of the 50S ribosomal subunit; part of the 5S rRNA/L5/L18/L25 subcomplex. Contacts the 5S and 23S rRNAs.</text>
</comment>
<comment type="similarity">
    <text evidence="1">Belongs to the universal ribosomal protein uL18 family.</text>
</comment>
<sequence>MSVKKETRLRRARKTRLKMRELEVVRLCVHRSSQHIYAQVITADGGKVLASASTLDKELRGAATGNVEAAKKVGLLVAERAKAAGVTQVAFDRSGFKYHGRVKALADAAREGGLEF</sequence>
<reference key="1">
    <citation type="journal article" date="2009" name="J. Bacteriol.">
        <title>Genome sequence of Azotobacter vinelandii, an obligate aerobe specialized to support diverse anaerobic metabolic processes.</title>
        <authorList>
            <person name="Setubal J.C."/>
            <person name="Dos Santos P."/>
            <person name="Goldman B.S."/>
            <person name="Ertesvaag H."/>
            <person name="Espin G."/>
            <person name="Rubio L.M."/>
            <person name="Valla S."/>
            <person name="Almeida N.F."/>
            <person name="Balasubramanian D."/>
            <person name="Cromes L."/>
            <person name="Curatti L."/>
            <person name="Du Z."/>
            <person name="Godsy E."/>
            <person name="Goodner B."/>
            <person name="Hellner-Burris K."/>
            <person name="Hernandez J.A."/>
            <person name="Houmiel K."/>
            <person name="Imperial J."/>
            <person name="Kennedy C."/>
            <person name="Larson T.J."/>
            <person name="Latreille P."/>
            <person name="Ligon L.S."/>
            <person name="Lu J."/>
            <person name="Maerk M."/>
            <person name="Miller N.M."/>
            <person name="Norton S."/>
            <person name="O'Carroll I.P."/>
            <person name="Paulsen I."/>
            <person name="Raulfs E.C."/>
            <person name="Roemer R."/>
            <person name="Rosser J."/>
            <person name="Segura D."/>
            <person name="Slater S."/>
            <person name="Stricklin S.L."/>
            <person name="Studholme D.J."/>
            <person name="Sun J."/>
            <person name="Viana C.J."/>
            <person name="Wallin E."/>
            <person name="Wang B."/>
            <person name="Wheeler C."/>
            <person name="Zhu H."/>
            <person name="Dean D.R."/>
            <person name="Dixon R."/>
            <person name="Wood D."/>
        </authorList>
    </citation>
    <scope>NUCLEOTIDE SEQUENCE [LARGE SCALE GENOMIC DNA]</scope>
    <source>
        <strain>DJ / ATCC BAA-1303</strain>
    </source>
</reference>